<protein>
    <recommendedName>
        <fullName>Aquaporin TIP3-2</fullName>
    </recommendedName>
    <alternativeName>
        <fullName>Tonoplast intrinsic protein 3-2</fullName>
    </alternativeName>
    <alternativeName>
        <fullName>ZmTIP3-2</fullName>
    </alternativeName>
    <alternativeName>
        <fullName>ZmTIP3;2</fullName>
    </alternativeName>
</protein>
<keyword id="KW-0472">Membrane</keyword>
<keyword id="KW-1185">Reference proteome</keyword>
<keyword id="KW-0677">Repeat</keyword>
<keyword id="KW-0812">Transmembrane</keyword>
<keyword id="KW-1133">Transmembrane helix</keyword>
<keyword id="KW-0813">Transport</keyword>
<keyword id="KW-0926">Vacuole</keyword>
<comment type="function">
    <text evidence="1">Aquaporins facilitate the transport of water and small neutral solutes across cell membranes.</text>
</comment>
<comment type="subcellular location">
    <subcellularLocation>
        <location evidence="1">Vacuole membrane</location>
        <topology evidence="1">Multi-pass membrane protein</topology>
    </subcellularLocation>
    <text>Tonoplast.</text>
</comment>
<comment type="domain">
    <text>Aquaporins contain two tandem repeats each containing three membrane-spanning domains and a pore-forming loop with the signature motif Asn-Pro-Ala (NPA).</text>
</comment>
<comment type="similarity">
    <text evidence="3">Belongs to the MIP/aquaporin (TC 1.A.8) family. TIP (TC 1.A.8.10) subfamily.</text>
</comment>
<organism>
    <name type="scientific">Zea mays</name>
    <name type="common">Maize</name>
    <dbReference type="NCBI Taxonomy" id="4577"/>
    <lineage>
        <taxon>Eukaryota</taxon>
        <taxon>Viridiplantae</taxon>
        <taxon>Streptophyta</taxon>
        <taxon>Embryophyta</taxon>
        <taxon>Tracheophyta</taxon>
        <taxon>Spermatophyta</taxon>
        <taxon>Magnoliopsida</taxon>
        <taxon>Liliopsida</taxon>
        <taxon>Poales</taxon>
        <taxon>Poaceae</taxon>
        <taxon>PACMAD clade</taxon>
        <taxon>Panicoideae</taxon>
        <taxon>Andropogonodae</taxon>
        <taxon>Andropogoneae</taxon>
        <taxon>Tripsacinae</taxon>
        <taxon>Zea</taxon>
    </lineage>
</organism>
<sequence>MSTATGVRAGRRFTVGRSEDATHPDTIRAAISEFIATAIFVFAAEGSVLSLGKMYHDHSTISTAGGLVAVALAHALGLAVAVAVAVNVSGGHVNPAVTFGALVGGRVSLVRAVLYWAAQLLGAVAATLLLRLATGGARPPGFALASGVGDGHAVLLEAVMTFGFVYAYYATVVDPKRGHLGTIAPLAVGFLLGANVLAGGPFDGAGMNPARVFGPALVGWRWRHHWVYWLGPFLGAGLAGLVYEYLLIPPADAVPHTHQPLAPEDY</sequence>
<evidence type="ECO:0000250" key="1"/>
<evidence type="ECO:0000255" key="2"/>
<evidence type="ECO:0000305" key="3"/>
<dbReference type="EMBL" id="AF342809">
    <property type="protein sequence ID" value="AAK26848.1"/>
    <property type="molecule type" value="mRNA"/>
</dbReference>
<dbReference type="RefSeq" id="NP_001105045.2">
    <property type="nucleotide sequence ID" value="NM_001111575.2"/>
</dbReference>
<dbReference type="SMR" id="Q9AT75"/>
<dbReference type="FunCoup" id="Q9AT75">
    <property type="interactions" value="415"/>
</dbReference>
<dbReference type="STRING" id="4577.Q9AT75"/>
<dbReference type="PaxDb" id="4577-GRMZM2G103983_P01"/>
<dbReference type="GeneID" id="541912"/>
<dbReference type="KEGG" id="zma:541912"/>
<dbReference type="eggNOG" id="KOG0223">
    <property type="taxonomic scope" value="Eukaryota"/>
</dbReference>
<dbReference type="InParanoid" id="Q9AT75"/>
<dbReference type="OrthoDB" id="3222at2759"/>
<dbReference type="Proteomes" id="UP000007305">
    <property type="component" value="Unplaced"/>
</dbReference>
<dbReference type="ExpressionAtlas" id="Q9AT75">
    <property type="expression patterns" value="baseline and differential"/>
</dbReference>
<dbReference type="GO" id="GO:0016020">
    <property type="term" value="C:membrane"/>
    <property type="evidence" value="ECO:0000318"/>
    <property type="project" value="GO_Central"/>
</dbReference>
<dbReference type="GO" id="GO:0005774">
    <property type="term" value="C:vacuolar membrane"/>
    <property type="evidence" value="ECO:0007669"/>
    <property type="project" value="UniProtKB-SubCell"/>
</dbReference>
<dbReference type="GO" id="GO:0015250">
    <property type="term" value="F:water channel activity"/>
    <property type="evidence" value="ECO:0000318"/>
    <property type="project" value="GO_Central"/>
</dbReference>
<dbReference type="GO" id="GO:0006833">
    <property type="term" value="P:water transport"/>
    <property type="evidence" value="ECO:0000318"/>
    <property type="project" value="GO_Central"/>
</dbReference>
<dbReference type="CDD" id="cd00333">
    <property type="entry name" value="MIP"/>
    <property type="match status" value="1"/>
</dbReference>
<dbReference type="FunFam" id="1.20.1080.10:FF:000002">
    <property type="entry name" value="Probable aquaporin TIP1-1"/>
    <property type="match status" value="1"/>
</dbReference>
<dbReference type="Gene3D" id="1.20.1080.10">
    <property type="entry name" value="Glycerol uptake facilitator protein"/>
    <property type="match status" value="1"/>
</dbReference>
<dbReference type="InterPro" id="IPR023271">
    <property type="entry name" value="Aquaporin-like"/>
</dbReference>
<dbReference type="InterPro" id="IPR034294">
    <property type="entry name" value="Aquaporin_transptr"/>
</dbReference>
<dbReference type="InterPro" id="IPR000425">
    <property type="entry name" value="MIP"/>
</dbReference>
<dbReference type="InterPro" id="IPR022357">
    <property type="entry name" value="MIP_CS"/>
</dbReference>
<dbReference type="NCBIfam" id="TIGR00861">
    <property type="entry name" value="MIP"/>
    <property type="match status" value="1"/>
</dbReference>
<dbReference type="PANTHER" id="PTHR45665:SF23">
    <property type="entry name" value="AQUAPORIN TIP3-2-RELATED"/>
    <property type="match status" value="1"/>
</dbReference>
<dbReference type="PANTHER" id="PTHR45665">
    <property type="entry name" value="AQUAPORIN-8"/>
    <property type="match status" value="1"/>
</dbReference>
<dbReference type="Pfam" id="PF00230">
    <property type="entry name" value="MIP"/>
    <property type="match status" value="1"/>
</dbReference>
<dbReference type="PRINTS" id="PR00783">
    <property type="entry name" value="MINTRINSICP"/>
</dbReference>
<dbReference type="SUPFAM" id="SSF81338">
    <property type="entry name" value="Aquaporin-like"/>
    <property type="match status" value="1"/>
</dbReference>
<dbReference type="PROSITE" id="PS00221">
    <property type="entry name" value="MIP"/>
    <property type="match status" value="1"/>
</dbReference>
<gene>
    <name type="primary">TIP3-2</name>
</gene>
<feature type="chain" id="PRO_0000286007" description="Aquaporin TIP3-2">
    <location>
        <begin position="1"/>
        <end position="266"/>
    </location>
</feature>
<feature type="transmembrane region" description="Helical; Name=1" evidence="2">
    <location>
        <begin position="29"/>
        <end position="49"/>
    </location>
</feature>
<feature type="transmembrane region" description="Helical; Name=2" evidence="2">
    <location>
        <begin position="66"/>
        <end position="86"/>
    </location>
</feature>
<feature type="transmembrane region" description="Helical; Name=3" evidence="2">
    <location>
        <begin position="109"/>
        <end position="129"/>
    </location>
</feature>
<feature type="transmembrane region" description="Helical; Name=4" evidence="2">
    <location>
        <begin position="153"/>
        <end position="173"/>
    </location>
</feature>
<feature type="transmembrane region" description="Helical; Name=5" evidence="2">
    <location>
        <begin position="180"/>
        <end position="200"/>
    </location>
</feature>
<feature type="transmembrane region" description="Helical; Name=6" evidence="2">
    <location>
        <begin position="228"/>
        <end position="248"/>
    </location>
</feature>
<feature type="short sequence motif" description="NPA 1" evidence="1">
    <location>
        <begin position="94"/>
        <end position="96"/>
    </location>
</feature>
<feature type="short sequence motif" description="NPA 2" evidence="1">
    <location>
        <begin position="208"/>
        <end position="210"/>
    </location>
</feature>
<reference key="1">
    <citation type="journal article" date="2001" name="Plant Physiol.">
        <title>Aquaporins constitute a large and highly divergent protein family in maize.</title>
        <authorList>
            <person name="Chaumont F."/>
            <person name="Barrieu F."/>
            <person name="Wojcik E."/>
            <person name="Chrispeels M.J."/>
            <person name="Jung R."/>
        </authorList>
    </citation>
    <scope>NUCLEOTIDE SEQUENCE [MRNA]</scope>
    <scope>GENE FAMILY</scope>
    <scope>NOMENCLATURE</scope>
    <source>
        <strain>cv. B73</strain>
    </source>
</reference>
<name>TIP32_MAIZE</name>
<proteinExistence type="evidence at transcript level"/>
<accession>Q9AT75</accession>